<feature type="chain" id="PRO_0000329970" description="Origin recognition complex subunit 2">
    <location>
        <begin position="1"/>
        <end position="391"/>
    </location>
</feature>
<feature type="region of interest" description="Disordered" evidence="2">
    <location>
        <begin position="1"/>
        <end position="43"/>
    </location>
</feature>
<feature type="compositionally biased region" description="Polar residues" evidence="2">
    <location>
        <begin position="22"/>
        <end position="38"/>
    </location>
</feature>
<accession>Q55CU7</accession>
<reference key="1">
    <citation type="journal article" date="2005" name="Nature">
        <title>The genome of the social amoeba Dictyostelium discoideum.</title>
        <authorList>
            <person name="Eichinger L."/>
            <person name="Pachebat J.A."/>
            <person name="Gloeckner G."/>
            <person name="Rajandream M.A."/>
            <person name="Sucgang R."/>
            <person name="Berriman M."/>
            <person name="Song J."/>
            <person name="Olsen R."/>
            <person name="Szafranski K."/>
            <person name="Xu Q."/>
            <person name="Tunggal B."/>
            <person name="Kummerfeld S."/>
            <person name="Madera M."/>
            <person name="Konfortov B.A."/>
            <person name="Rivero F."/>
            <person name="Bankier A.T."/>
            <person name="Lehmann R."/>
            <person name="Hamlin N."/>
            <person name="Davies R."/>
            <person name="Gaudet P."/>
            <person name="Fey P."/>
            <person name="Pilcher K."/>
            <person name="Chen G."/>
            <person name="Saunders D."/>
            <person name="Sodergren E.J."/>
            <person name="Davis P."/>
            <person name="Kerhornou A."/>
            <person name="Nie X."/>
            <person name="Hall N."/>
            <person name="Anjard C."/>
            <person name="Hemphill L."/>
            <person name="Bason N."/>
            <person name="Farbrother P."/>
            <person name="Desany B."/>
            <person name="Just E."/>
            <person name="Morio T."/>
            <person name="Rost R."/>
            <person name="Churcher C.M."/>
            <person name="Cooper J."/>
            <person name="Haydock S."/>
            <person name="van Driessche N."/>
            <person name="Cronin A."/>
            <person name="Goodhead I."/>
            <person name="Muzny D.M."/>
            <person name="Mourier T."/>
            <person name="Pain A."/>
            <person name="Lu M."/>
            <person name="Harper D."/>
            <person name="Lindsay R."/>
            <person name="Hauser H."/>
            <person name="James K.D."/>
            <person name="Quiles M."/>
            <person name="Madan Babu M."/>
            <person name="Saito T."/>
            <person name="Buchrieser C."/>
            <person name="Wardroper A."/>
            <person name="Felder M."/>
            <person name="Thangavelu M."/>
            <person name="Johnson D."/>
            <person name="Knights A."/>
            <person name="Loulseged H."/>
            <person name="Mungall K.L."/>
            <person name="Oliver K."/>
            <person name="Price C."/>
            <person name="Quail M.A."/>
            <person name="Urushihara H."/>
            <person name="Hernandez J."/>
            <person name="Rabbinowitsch E."/>
            <person name="Steffen D."/>
            <person name="Sanders M."/>
            <person name="Ma J."/>
            <person name="Kohara Y."/>
            <person name="Sharp S."/>
            <person name="Simmonds M.N."/>
            <person name="Spiegler S."/>
            <person name="Tivey A."/>
            <person name="Sugano S."/>
            <person name="White B."/>
            <person name="Walker D."/>
            <person name="Woodward J.R."/>
            <person name="Winckler T."/>
            <person name="Tanaka Y."/>
            <person name="Shaulsky G."/>
            <person name="Schleicher M."/>
            <person name="Weinstock G.M."/>
            <person name="Rosenthal A."/>
            <person name="Cox E.C."/>
            <person name="Chisholm R.L."/>
            <person name="Gibbs R.A."/>
            <person name="Loomis W.F."/>
            <person name="Platzer M."/>
            <person name="Kay R.R."/>
            <person name="Williams J.G."/>
            <person name="Dear P.H."/>
            <person name="Noegel A.A."/>
            <person name="Barrell B.G."/>
            <person name="Kuspa A."/>
        </authorList>
    </citation>
    <scope>NUCLEOTIDE SEQUENCE [LARGE SCALE GENOMIC DNA]</scope>
    <source>
        <strain>AX4</strain>
    </source>
</reference>
<dbReference type="EMBL" id="AAFI02000005">
    <property type="protein sequence ID" value="EAL72297.1"/>
    <property type="molecule type" value="Genomic_DNA"/>
</dbReference>
<dbReference type="RefSeq" id="XP_646384.1">
    <property type="nucleotide sequence ID" value="XM_641292.1"/>
</dbReference>
<dbReference type="SMR" id="Q55CU7"/>
<dbReference type="FunCoup" id="Q55CU7">
    <property type="interactions" value="866"/>
</dbReference>
<dbReference type="STRING" id="44689.Q55CU7"/>
<dbReference type="PaxDb" id="44689-DDB0231726"/>
<dbReference type="EnsemblProtists" id="EAL72297">
    <property type="protein sequence ID" value="EAL72297"/>
    <property type="gene ID" value="DDB_G0269894"/>
</dbReference>
<dbReference type="GeneID" id="8617339"/>
<dbReference type="KEGG" id="ddi:DDB_G0269894"/>
<dbReference type="dictyBase" id="DDB_G0269894">
    <property type="gene designation" value="orcB"/>
</dbReference>
<dbReference type="VEuPathDB" id="AmoebaDB:DDB_G0269894"/>
<dbReference type="eggNOG" id="KOG2928">
    <property type="taxonomic scope" value="Eukaryota"/>
</dbReference>
<dbReference type="HOGENOM" id="CLU_018596_1_0_1"/>
<dbReference type="InParanoid" id="Q55CU7"/>
<dbReference type="OMA" id="WETHCCK"/>
<dbReference type="PhylomeDB" id="Q55CU7"/>
<dbReference type="Reactome" id="R-DDI-68616">
    <property type="pathway name" value="Assembly of the ORC complex at the origin of replication"/>
</dbReference>
<dbReference type="Reactome" id="R-DDI-68689">
    <property type="pathway name" value="CDC6 association with the ORC:origin complex"/>
</dbReference>
<dbReference type="Reactome" id="R-DDI-68962">
    <property type="pathway name" value="Activation of the pre-replicative complex"/>
</dbReference>
<dbReference type="PRO" id="PR:Q55CU7"/>
<dbReference type="Proteomes" id="UP000002195">
    <property type="component" value="Chromosome 1"/>
</dbReference>
<dbReference type="GO" id="GO:0005737">
    <property type="term" value="C:cytoplasm"/>
    <property type="evidence" value="ECO:0000314"/>
    <property type="project" value="dictyBase"/>
</dbReference>
<dbReference type="GO" id="GO:0005664">
    <property type="term" value="C:nuclear origin of replication recognition complex"/>
    <property type="evidence" value="ECO:0000318"/>
    <property type="project" value="GO_Central"/>
</dbReference>
<dbReference type="GO" id="GO:0005634">
    <property type="term" value="C:nucleus"/>
    <property type="evidence" value="ECO:0000314"/>
    <property type="project" value="dictyBase"/>
</dbReference>
<dbReference type="GO" id="GO:0003688">
    <property type="term" value="F:DNA replication origin binding"/>
    <property type="evidence" value="ECO:0000318"/>
    <property type="project" value="GO_Central"/>
</dbReference>
<dbReference type="GO" id="GO:0006260">
    <property type="term" value="P:DNA replication"/>
    <property type="evidence" value="ECO:0007669"/>
    <property type="project" value="UniProtKB-KW"/>
</dbReference>
<dbReference type="InterPro" id="IPR007220">
    <property type="entry name" value="ORC2"/>
</dbReference>
<dbReference type="InterPro" id="IPR056772">
    <property type="entry name" value="RecA-like_ORC2"/>
</dbReference>
<dbReference type="InterPro" id="IPR056773">
    <property type="entry name" value="WHD_ORC2"/>
</dbReference>
<dbReference type="PANTHER" id="PTHR14052">
    <property type="entry name" value="ORIGIN RECOGNITION COMPLEX SUBUNIT 2"/>
    <property type="match status" value="1"/>
</dbReference>
<dbReference type="PANTHER" id="PTHR14052:SF0">
    <property type="entry name" value="ORIGIN RECOGNITION COMPLEX SUBUNIT 2"/>
    <property type="match status" value="1"/>
</dbReference>
<dbReference type="Pfam" id="PF04084">
    <property type="entry name" value="RecA-like_ORC2"/>
    <property type="match status" value="1"/>
</dbReference>
<dbReference type="Pfam" id="PF24882">
    <property type="entry name" value="WHD_ORC2"/>
    <property type="match status" value="1"/>
</dbReference>
<name>ORC2_DICDI</name>
<comment type="function">
    <text evidence="1">Component of the origin recognition complex (ORC) that binds origins of replication. DNA-binding is ATP-dependent, however specific DNA sequences that define origins of replication have not been identified so far. ORC is required to assemble the pre-replication complex necessary to initiate DNA replication (By similarity).</text>
</comment>
<comment type="subunit">
    <text evidence="1">ORC is composed of six subunits.</text>
</comment>
<comment type="subcellular location">
    <subcellularLocation>
        <location evidence="1">Nucleus</location>
    </subcellularLocation>
</comment>
<comment type="similarity">
    <text evidence="3">Belongs to the ORC2 family.</text>
</comment>
<gene>
    <name type="primary">orcB</name>
    <name type="synonym">orc2</name>
    <name type="ORF">DDB_G0269894</name>
</gene>
<keyword id="KW-0235">DNA replication</keyword>
<keyword id="KW-0238">DNA-binding</keyword>
<keyword id="KW-0539">Nucleus</keyword>
<keyword id="KW-1185">Reference proteome</keyword>
<organism>
    <name type="scientific">Dictyostelium discoideum</name>
    <name type="common">Social amoeba</name>
    <dbReference type="NCBI Taxonomy" id="44689"/>
    <lineage>
        <taxon>Eukaryota</taxon>
        <taxon>Amoebozoa</taxon>
        <taxon>Evosea</taxon>
        <taxon>Eumycetozoa</taxon>
        <taxon>Dictyostelia</taxon>
        <taxon>Dictyosteliales</taxon>
        <taxon>Dictyosteliaceae</taxon>
        <taxon>Dictyostelium</taxon>
    </lineage>
</organism>
<proteinExistence type="inferred from homology"/>
<sequence length="391" mass="44432">MEEYTDSGEDKNVYSDDDNDYFTASTQNNRTSKNTDSSPLDPKRLAEEMSKIQPKHEKEKKKLFESYYKTRENEENGADNHCFKFNKIYTDLKFDYSVLVSGFGSKIQLIETFVKEFCTDGPSLHFKGYLPNLSVRDLLYKITFSLFGIDKKIASPIAHCNFIKSIFESGSMDINKMRQTFGGRFDYGIPDHVYVVIHNIDGYSLRNETSQLTLALLATIPQVHMIATIDAIGAQLLWDNRMLSNFNWTTYSMPTYQPYDLELSYDTNTKGGGGGGGIGSKSSSGTNKNLQPSTILTVLKSLTEISTDIFKELLTYLIKKKKNKMEFKILFDICRDAFLVSSESGLKTQLREFIDHKIIIQKEIGDTTFLIIPIETSVMEIILSQLENSIS</sequence>
<evidence type="ECO:0000250" key="1"/>
<evidence type="ECO:0000256" key="2">
    <source>
        <dbReference type="SAM" id="MobiDB-lite"/>
    </source>
</evidence>
<evidence type="ECO:0000305" key="3"/>
<protein>
    <recommendedName>
        <fullName>Origin recognition complex subunit 2</fullName>
    </recommendedName>
    <alternativeName>
        <fullName>Origin replication complex subunit B</fullName>
    </alternativeName>
</protein>